<reference key="1">
    <citation type="journal article" date="2006" name="J. Bacteriol.">
        <title>Complete genome sequence of Yersinia pestis strains Antiqua and Nepal516: evidence of gene reduction in an emerging pathogen.</title>
        <authorList>
            <person name="Chain P.S.G."/>
            <person name="Hu P."/>
            <person name="Malfatti S.A."/>
            <person name="Radnedge L."/>
            <person name="Larimer F."/>
            <person name="Vergez L.M."/>
            <person name="Worsham P."/>
            <person name="Chu M.C."/>
            <person name="Andersen G.L."/>
        </authorList>
    </citation>
    <scope>NUCLEOTIDE SEQUENCE [LARGE SCALE GENOMIC DNA]</scope>
    <source>
        <strain>Antiqua</strain>
    </source>
</reference>
<accession>Q1C0X4</accession>
<keyword id="KW-0997">Cell inner membrane</keyword>
<keyword id="KW-1003">Cell membrane</keyword>
<keyword id="KW-0201">Cytochrome c-type biogenesis</keyword>
<keyword id="KW-1015">Disulfide bond</keyword>
<keyword id="KW-0249">Electron transport</keyword>
<keyword id="KW-0472">Membrane</keyword>
<keyword id="KW-0520">NAD</keyword>
<keyword id="KW-0560">Oxidoreductase</keyword>
<keyword id="KW-0676">Redox-active center</keyword>
<keyword id="KW-0732">Signal</keyword>
<keyword id="KW-0812">Transmembrane</keyword>
<keyword id="KW-1133">Transmembrane helix</keyword>
<keyword id="KW-0813">Transport</keyword>
<evidence type="ECO:0000255" key="1">
    <source>
        <dbReference type="HAMAP-Rule" id="MF_00399"/>
    </source>
</evidence>
<evidence type="ECO:0000256" key="2">
    <source>
        <dbReference type="SAM" id="MobiDB-lite"/>
    </source>
</evidence>
<sequence length="595" mass="64506">MAQRFITLILLLCSVLLAPHSAQSSLFGENASFGTKNSQSRFIPVDQAFAFDFHQQGDQLNLSWQIHPGYYLYRQQIKIVPQQAALGAFTLPEGITHHDEFYGEVEIFKQQLTLKIPITQAAEQASVSVTYQGCAEAGFCYPPETRVIPLDVVVAASTASGTAAVNSSATVNPPATTQPEGDATPVPSTLPFSPLWALLIGIGIAFTPCVLPMYPLISAVILGREKPHSQRRILILAVVYVQGMALTYTLLGLVVAAAGLQFQAALQHPYVLIGLSVLFVLLALSMFGLYSLQLPSSLQTRLTQWSNSQRGGSLAGVFAMGALAGLICSPCTTAPLSAILLYIAQSGNMLAGGGTLYLYALGMGIPLVVVTLFGNKLIPRSGPWMQYVKEAFGFVILALPVFLLERVLGDVWGLRLWSLLAVAFFGWAFVLSLKAHAGWVRVCQLLLLAALLIVARPLQDWAFNGNTQQNAVKHINFQPVANLPQLQAVLAQAQGKPVMLDLYADWCVACKEFEKYTFSDDKVQRQLANTLLLQADVTANNAEHATLLKKFNVLGLPTILFFDSQGNEITAARVTGFMDAAQFLQHLQNTPAVTK</sequence>
<name>DSBD_YERPA</name>
<comment type="function">
    <text evidence="1">Required to facilitate the formation of correct disulfide bonds in some periplasmic proteins and for the assembly of the periplasmic c-type cytochromes. Acts by transferring electrons from cytoplasmic thioredoxin to the periplasm. This transfer involves a cascade of disulfide bond formation and reduction steps.</text>
</comment>
<comment type="catalytic activity">
    <reaction evidence="1">
        <text>[protein]-dithiol + NAD(+) = [protein]-disulfide + NADH + H(+)</text>
        <dbReference type="Rhea" id="RHEA:18749"/>
        <dbReference type="Rhea" id="RHEA-COMP:10593"/>
        <dbReference type="Rhea" id="RHEA-COMP:10594"/>
        <dbReference type="ChEBI" id="CHEBI:15378"/>
        <dbReference type="ChEBI" id="CHEBI:29950"/>
        <dbReference type="ChEBI" id="CHEBI:50058"/>
        <dbReference type="ChEBI" id="CHEBI:57540"/>
        <dbReference type="ChEBI" id="CHEBI:57945"/>
        <dbReference type="EC" id="1.8.1.8"/>
    </reaction>
</comment>
<comment type="catalytic activity">
    <reaction evidence="1">
        <text>[protein]-dithiol + NADP(+) = [protein]-disulfide + NADPH + H(+)</text>
        <dbReference type="Rhea" id="RHEA:18753"/>
        <dbReference type="Rhea" id="RHEA-COMP:10593"/>
        <dbReference type="Rhea" id="RHEA-COMP:10594"/>
        <dbReference type="ChEBI" id="CHEBI:15378"/>
        <dbReference type="ChEBI" id="CHEBI:29950"/>
        <dbReference type="ChEBI" id="CHEBI:50058"/>
        <dbReference type="ChEBI" id="CHEBI:57783"/>
        <dbReference type="ChEBI" id="CHEBI:58349"/>
        <dbReference type="EC" id="1.8.1.8"/>
    </reaction>
</comment>
<comment type="subcellular location">
    <subcellularLocation>
        <location evidence="1">Cell inner membrane</location>
        <topology evidence="1">Multi-pass membrane protein</topology>
    </subcellularLocation>
</comment>
<comment type="similarity">
    <text evidence="1">Belongs to the thioredoxin family. DsbD subfamily.</text>
</comment>
<protein>
    <recommendedName>
        <fullName evidence="1">Thiol:disulfide interchange protein DsbD</fullName>
        <ecNumber evidence="1">1.8.1.8</ecNumber>
    </recommendedName>
    <alternativeName>
        <fullName evidence="1">Protein-disulfide reductase</fullName>
        <shortName evidence="1">Disulfide reductase</shortName>
    </alternativeName>
</protein>
<proteinExistence type="inferred from homology"/>
<organism>
    <name type="scientific">Yersinia pestis bv. Antiqua (strain Antiqua)</name>
    <dbReference type="NCBI Taxonomy" id="360102"/>
    <lineage>
        <taxon>Bacteria</taxon>
        <taxon>Pseudomonadati</taxon>
        <taxon>Pseudomonadota</taxon>
        <taxon>Gammaproteobacteria</taxon>
        <taxon>Enterobacterales</taxon>
        <taxon>Yersiniaceae</taxon>
        <taxon>Yersinia</taxon>
    </lineage>
</organism>
<feature type="signal peptide" evidence="1">
    <location>
        <begin position="1"/>
        <end position="24"/>
    </location>
</feature>
<feature type="chain" id="PRO_5000116349" description="Thiol:disulfide interchange protein DsbD">
    <location>
        <begin position="25"/>
        <end position="595"/>
    </location>
</feature>
<feature type="transmembrane region" description="Helical" evidence="1">
    <location>
        <begin position="197"/>
        <end position="217"/>
    </location>
</feature>
<feature type="transmembrane region" description="Helical" evidence="1">
    <location>
        <begin position="233"/>
        <end position="253"/>
    </location>
</feature>
<feature type="transmembrane region" description="Helical" evidence="1">
    <location>
        <begin position="270"/>
        <end position="290"/>
    </location>
</feature>
<feature type="transmembrane region" description="Helical" evidence="1">
    <location>
        <begin position="311"/>
        <end position="331"/>
    </location>
</feature>
<feature type="transmembrane region" description="Helical" evidence="1">
    <location>
        <begin position="332"/>
        <end position="352"/>
    </location>
</feature>
<feature type="transmembrane region" description="Helical" evidence="1">
    <location>
        <begin position="353"/>
        <end position="373"/>
    </location>
</feature>
<feature type="transmembrane region" description="Helical" evidence="1">
    <location>
        <begin position="384"/>
        <end position="404"/>
    </location>
</feature>
<feature type="transmembrane region" description="Helical" evidence="1">
    <location>
        <begin position="411"/>
        <end position="431"/>
    </location>
</feature>
<feature type="transmembrane region" description="Helical" evidence="1">
    <location>
        <begin position="435"/>
        <end position="455"/>
    </location>
</feature>
<feature type="domain" description="Thioredoxin" evidence="1">
    <location>
        <begin position="452"/>
        <end position="592"/>
    </location>
</feature>
<feature type="region of interest" description="Disordered" evidence="2">
    <location>
        <begin position="166"/>
        <end position="186"/>
    </location>
</feature>
<feature type="disulfide bond" description="Redox-active" evidence="1">
    <location>
        <begin position="134"/>
        <end position="140"/>
    </location>
</feature>
<feature type="disulfide bond" description="Redox-active" evidence="1">
    <location>
        <begin position="209"/>
        <end position="331"/>
    </location>
</feature>
<feature type="disulfide bond" description="Redox-active" evidence="1">
    <location>
        <begin position="507"/>
        <end position="510"/>
    </location>
</feature>
<dbReference type="EC" id="1.8.1.8" evidence="1"/>
<dbReference type="EMBL" id="CP000308">
    <property type="protein sequence ID" value="ABG15898.1"/>
    <property type="molecule type" value="Genomic_DNA"/>
</dbReference>
<dbReference type="RefSeq" id="WP_002209121.1">
    <property type="nucleotide sequence ID" value="NZ_CP009906.1"/>
</dbReference>
<dbReference type="SMR" id="Q1C0X4"/>
<dbReference type="KEGG" id="ypa:YPA_3937"/>
<dbReference type="Proteomes" id="UP000001971">
    <property type="component" value="Chromosome"/>
</dbReference>
<dbReference type="GO" id="GO:0005886">
    <property type="term" value="C:plasma membrane"/>
    <property type="evidence" value="ECO:0007669"/>
    <property type="project" value="UniProtKB-SubCell"/>
</dbReference>
<dbReference type="GO" id="GO:0009055">
    <property type="term" value="F:electron transfer activity"/>
    <property type="evidence" value="ECO:0007669"/>
    <property type="project" value="UniProtKB-UniRule"/>
</dbReference>
<dbReference type="GO" id="GO:0047134">
    <property type="term" value="F:protein-disulfide reductase [NAD(P)H] activity"/>
    <property type="evidence" value="ECO:0007669"/>
    <property type="project" value="UniProtKB-UniRule"/>
</dbReference>
<dbReference type="GO" id="GO:0045454">
    <property type="term" value="P:cell redox homeostasis"/>
    <property type="evidence" value="ECO:0007669"/>
    <property type="project" value="TreeGrafter"/>
</dbReference>
<dbReference type="GO" id="GO:0017004">
    <property type="term" value="P:cytochrome complex assembly"/>
    <property type="evidence" value="ECO:0007669"/>
    <property type="project" value="UniProtKB-UniRule"/>
</dbReference>
<dbReference type="CDD" id="cd02953">
    <property type="entry name" value="DsbDgamma"/>
    <property type="match status" value="1"/>
</dbReference>
<dbReference type="FunFam" id="2.60.40.1250:FF:000001">
    <property type="entry name" value="Thiol:disulfide interchange protein DsbD"/>
    <property type="match status" value="1"/>
</dbReference>
<dbReference type="FunFam" id="3.40.30.10:FF:000116">
    <property type="entry name" value="Thiol:disulfide interchange protein DsbD"/>
    <property type="match status" value="1"/>
</dbReference>
<dbReference type="Gene3D" id="3.40.30.10">
    <property type="entry name" value="Glutaredoxin"/>
    <property type="match status" value="1"/>
</dbReference>
<dbReference type="Gene3D" id="2.60.40.1250">
    <property type="entry name" value="Thiol:disulfide interchange protein DsbD, N-terminal domain"/>
    <property type="match status" value="1"/>
</dbReference>
<dbReference type="HAMAP" id="MF_00399">
    <property type="entry name" value="DbsD"/>
    <property type="match status" value="1"/>
</dbReference>
<dbReference type="InterPro" id="IPR003834">
    <property type="entry name" value="Cyt_c_assmbl_TM_dom"/>
</dbReference>
<dbReference type="InterPro" id="IPR035671">
    <property type="entry name" value="DsbD_gamma"/>
</dbReference>
<dbReference type="InterPro" id="IPR028250">
    <property type="entry name" value="DsbDN"/>
</dbReference>
<dbReference type="InterPro" id="IPR036929">
    <property type="entry name" value="DsbDN_sf"/>
</dbReference>
<dbReference type="InterPro" id="IPR022910">
    <property type="entry name" value="Thiol_diS_interchange_DbsD"/>
</dbReference>
<dbReference type="InterPro" id="IPR012336">
    <property type="entry name" value="Thioredoxin-like_fold"/>
</dbReference>
<dbReference type="InterPro" id="IPR036249">
    <property type="entry name" value="Thioredoxin-like_sf"/>
</dbReference>
<dbReference type="InterPro" id="IPR017937">
    <property type="entry name" value="Thioredoxin_CS"/>
</dbReference>
<dbReference type="InterPro" id="IPR013766">
    <property type="entry name" value="Thioredoxin_domain"/>
</dbReference>
<dbReference type="NCBIfam" id="NF001419">
    <property type="entry name" value="PRK00293.1"/>
    <property type="match status" value="1"/>
</dbReference>
<dbReference type="PANTHER" id="PTHR32234">
    <property type="entry name" value="THIOL:DISULFIDE INTERCHANGE PROTEIN DSBD"/>
    <property type="match status" value="1"/>
</dbReference>
<dbReference type="PANTHER" id="PTHR32234:SF0">
    <property type="entry name" value="THIOL:DISULFIDE INTERCHANGE PROTEIN DSBD"/>
    <property type="match status" value="1"/>
</dbReference>
<dbReference type="Pfam" id="PF11412">
    <property type="entry name" value="DsbD_N"/>
    <property type="match status" value="1"/>
</dbReference>
<dbReference type="Pfam" id="PF02683">
    <property type="entry name" value="DsbD_TM"/>
    <property type="match status" value="1"/>
</dbReference>
<dbReference type="Pfam" id="PF13098">
    <property type="entry name" value="Thioredoxin_2"/>
    <property type="match status" value="1"/>
</dbReference>
<dbReference type="SUPFAM" id="SSF74863">
    <property type="entry name" value="Thiol:disulfide interchange protein DsbD, N-terminal domain (DsbD-alpha)"/>
    <property type="match status" value="1"/>
</dbReference>
<dbReference type="SUPFAM" id="SSF52833">
    <property type="entry name" value="Thioredoxin-like"/>
    <property type="match status" value="1"/>
</dbReference>
<dbReference type="PROSITE" id="PS00194">
    <property type="entry name" value="THIOREDOXIN_1"/>
    <property type="match status" value="1"/>
</dbReference>
<dbReference type="PROSITE" id="PS51352">
    <property type="entry name" value="THIOREDOXIN_2"/>
    <property type="match status" value="1"/>
</dbReference>
<gene>
    <name evidence="1" type="primary">dsbD</name>
    <name type="ordered locus">YPA_3937</name>
</gene>